<comment type="function">
    <text evidence="1">One of the primary rRNA binding proteins, it binds directly to 16S rRNA where it nucleates assembly of the head domain of the 30S subunit.</text>
</comment>
<comment type="subunit">
    <text>Part of the 30S ribosomal subunit.</text>
</comment>
<comment type="subcellular location">
    <subcellularLocation>
        <location>Plastid</location>
        <location>Chloroplast</location>
    </subcellularLocation>
</comment>
<comment type="similarity">
    <text evidence="2">Belongs to the universal ribosomal protein uS7 family.</text>
</comment>
<dbReference type="EMBL" id="AF123773">
    <property type="protein sequence ID" value="AAG26098.1"/>
    <property type="molecule type" value="Genomic_DNA"/>
</dbReference>
<dbReference type="RefSeq" id="YP_009310564.1">
    <property type="nucleotide sequence ID" value="NC_031505.1"/>
</dbReference>
<dbReference type="RefSeq" id="YP_009310577.1">
    <property type="nucleotide sequence ID" value="NC_031505.1"/>
</dbReference>
<dbReference type="SMR" id="Q9GFM9"/>
<dbReference type="GeneID" id="29991330"/>
<dbReference type="GeneID" id="29991362"/>
<dbReference type="GO" id="GO:0009507">
    <property type="term" value="C:chloroplast"/>
    <property type="evidence" value="ECO:0007669"/>
    <property type="project" value="UniProtKB-SubCell"/>
</dbReference>
<dbReference type="GO" id="GO:0015935">
    <property type="term" value="C:small ribosomal subunit"/>
    <property type="evidence" value="ECO:0007669"/>
    <property type="project" value="InterPro"/>
</dbReference>
<dbReference type="GO" id="GO:0019843">
    <property type="term" value="F:rRNA binding"/>
    <property type="evidence" value="ECO:0007669"/>
    <property type="project" value="UniProtKB-UniRule"/>
</dbReference>
<dbReference type="GO" id="GO:0003735">
    <property type="term" value="F:structural constituent of ribosome"/>
    <property type="evidence" value="ECO:0007669"/>
    <property type="project" value="InterPro"/>
</dbReference>
<dbReference type="GO" id="GO:0006412">
    <property type="term" value="P:translation"/>
    <property type="evidence" value="ECO:0007669"/>
    <property type="project" value="UniProtKB-UniRule"/>
</dbReference>
<dbReference type="CDD" id="cd14871">
    <property type="entry name" value="uS7_Chloroplast"/>
    <property type="match status" value="1"/>
</dbReference>
<dbReference type="FunFam" id="1.10.455.10:FF:000001">
    <property type="entry name" value="30S ribosomal protein S7"/>
    <property type="match status" value="1"/>
</dbReference>
<dbReference type="Gene3D" id="1.10.455.10">
    <property type="entry name" value="Ribosomal protein S7 domain"/>
    <property type="match status" value="1"/>
</dbReference>
<dbReference type="HAMAP" id="MF_00480_B">
    <property type="entry name" value="Ribosomal_uS7_B"/>
    <property type="match status" value="1"/>
</dbReference>
<dbReference type="InterPro" id="IPR000235">
    <property type="entry name" value="Ribosomal_uS7"/>
</dbReference>
<dbReference type="InterPro" id="IPR005717">
    <property type="entry name" value="Ribosomal_uS7_bac/org-type"/>
</dbReference>
<dbReference type="InterPro" id="IPR020606">
    <property type="entry name" value="Ribosomal_uS7_CS"/>
</dbReference>
<dbReference type="InterPro" id="IPR023798">
    <property type="entry name" value="Ribosomal_uS7_dom"/>
</dbReference>
<dbReference type="InterPro" id="IPR036823">
    <property type="entry name" value="Ribosomal_uS7_dom_sf"/>
</dbReference>
<dbReference type="NCBIfam" id="TIGR01029">
    <property type="entry name" value="rpsG_bact"/>
    <property type="match status" value="1"/>
</dbReference>
<dbReference type="PANTHER" id="PTHR11205">
    <property type="entry name" value="RIBOSOMAL PROTEIN S7"/>
    <property type="match status" value="1"/>
</dbReference>
<dbReference type="Pfam" id="PF00177">
    <property type="entry name" value="Ribosomal_S7"/>
    <property type="match status" value="1"/>
</dbReference>
<dbReference type="PIRSF" id="PIRSF002122">
    <property type="entry name" value="RPS7p_RPS7a_RPS5e_RPS7o"/>
    <property type="match status" value="1"/>
</dbReference>
<dbReference type="SUPFAM" id="SSF47973">
    <property type="entry name" value="Ribosomal protein S7"/>
    <property type="match status" value="1"/>
</dbReference>
<dbReference type="PROSITE" id="PS00052">
    <property type="entry name" value="RIBOSOMAL_S7"/>
    <property type="match status" value="1"/>
</dbReference>
<reference key="1">
    <citation type="journal article" date="2000" name="Am. J. Bot.">
        <title>Utility of 17 chloroplast genes for inferring the phylogeny of the basal angiosperms.</title>
        <authorList>
            <person name="Graham S.W."/>
            <person name="Olmstead R.G."/>
        </authorList>
    </citation>
    <scope>NUCLEOTIDE SEQUENCE [GENOMIC DNA]</scope>
</reference>
<keyword id="KW-0150">Chloroplast</keyword>
<keyword id="KW-0934">Plastid</keyword>
<keyword id="KW-0687">Ribonucleoprotein</keyword>
<keyword id="KW-0689">Ribosomal protein</keyword>
<keyword id="KW-0694">RNA-binding</keyword>
<keyword id="KW-0699">rRNA-binding</keyword>
<sequence>MSRRGTAEEKTAKSDPIYRNRLVNMLVNRILKHGKKSLAYQIIYRAVKKIQQKTETNPLSVLRQAIRGVTPNIAVKARRVGGSTHQVPIEIGSTQGKALAIRWLLGASRKRPGRNMAFKLSSELVDAAKGSGDAIRKKEETHRMAEANRAFAHFR</sequence>
<gene>
    <name type="primary">rps7</name>
</gene>
<protein>
    <recommendedName>
        <fullName evidence="2">Small ribosomal subunit protein uS7c</fullName>
    </recommendedName>
    <alternativeName>
        <fullName>30S ribosomal protein S7, chloroplastic</fullName>
    </alternativeName>
</protein>
<accession>Q9GFM9</accession>
<feature type="chain" id="PRO_0000124435" description="Small ribosomal subunit protein uS7c">
    <location>
        <begin position="1"/>
        <end position="155"/>
    </location>
</feature>
<evidence type="ECO:0000250" key="1"/>
<evidence type="ECO:0000305" key="2"/>
<proteinExistence type="inferred from homology"/>
<geneLocation type="chloroplast"/>
<name>RR7_CABCA</name>
<organism>
    <name type="scientific">Cabomba caroliniana</name>
    <name type="common">Carolina fanwort</name>
    <dbReference type="NCBI Taxonomy" id="4426"/>
    <lineage>
        <taxon>Eukaryota</taxon>
        <taxon>Viridiplantae</taxon>
        <taxon>Streptophyta</taxon>
        <taxon>Embryophyta</taxon>
        <taxon>Tracheophyta</taxon>
        <taxon>Spermatophyta</taxon>
        <taxon>Magnoliopsida</taxon>
        <taxon>Nymphaeales</taxon>
        <taxon>Cabombaceae</taxon>
        <taxon>Cabomba</taxon>
    </lineage>
</organism>